<reference evidence="4" key="1">
    <citation type="journal article" date="2015" name="FASEB J.">
        <title>Inhibition of cholinergic pathways in Drosophila melanogaster by alpha-conotoxins.</title>
        <authorList>
            <person name="Heghinian M.D."/>
            <person name="Mejia M."/>
            <person name="Adams D.J."/>
            <person name="Godenschwege T.A."/>
            <person name="Mari F."/>
        </authorList>
    </citation>
    <scope>PROTEIN SEQUENCE</scope>
    <scope>FUNCTION</scope>
    <scope>SUBCELLULAR LOCATION</scope>
    <scope>TISSUE SPECIFICITY</scope>
    <scope>HYDROXYLATION AT PRO-7</scope>
    <scope>AMIDATION AT CYS-13</scope>
    <scope>IDENTIFICATION BY MASS SPECTROMETRY</scope>
    <source>
        <tissue>Venom</tissue>
    </source>
</reference>
<proteinExistence type="evidence at protein level"/>
<sequence length="13" mass="1543">DYCCRRPTCIPIC</sequence>
<organism>
    <name type="scientific">Conus brunneus</name>
    <name type="common">Wood's brown cone</name>
    <dbReference type="NCBI Taxonomy" id="101289"/>
    <lineage>
        <taxon>Eukaryota</taxon>
        <taxon>Metazoa</taxon>
        <taxon>Spiralia</taxon>
        <taxon>Lophotrochozoa</taxon>
        <taxon>Mollusca</taxon>
        <taxon>Gastropoda</taxon>
        <taxon>Caenogastropoda</taxon>
        <taxon>Neogastropoda</taxon>
        <taxon>Conoidea</taxon>
        <taxon>Conidae</taxon>
        <taxon>Conus</taxon>
        <taxon>Stephanoconus</taxon>
    </lineage>
</organism>
<dbReference type="GO" id="GO:0005576">
    <property type="term" value="C:extracellular region"/>
    <property type="evidence" value="ECO:0007669"/>
    <property type="project" value="UniProtKB-SubCell"/>
</dbReference>
<dbReference type="GO" id="GO:0035792">
    <property type="term" value="C:host cell postsynaptic membrane"/>
    <property type="evidence" value="ECO:0007669"/>
    <property type="project" value="UniProtKB-KW"/>
</dbReference>
<dbReference type="GO" id="GO:0030550">
    <property type="term" value="F:acetylcholine receptor inhibitor activity"/>
    <property type="evidence" value="ECO:0007669"/>
    <property type="project" value="UniProtKB-KW"/>
</dbReference>
<dbReference type="GO" id="GO:0099106">
    <property type="term" value="F:ion channel regulator activity"/>
    <property type="evidence" value="ECO:0007669"/>
    <property type="project" value="UniProtKB-KW"/>
</dbReference>
<dbReference type="GO" id="GO:0090729">
    <property type="term" value="F:toxin activity"/>
    <property type="evidence" value="ECO:0007669"/>
    <property type="project" value="UniProtKB-KW"/>
</dbReference>
<name>CA1B_CONBR</name>
<keyword id="KW-0008">Acetylcholine receptor inhibiting toxin</keyword>
<keyword id="KW-0027">Amidation</keyword>
<keyword id="KW-0903">Direct protein sequencing</keyword>
<keyword id="KW-1015">Disulfide bond</keyword>
<keyword id="KW-0379">Hydroxylation</keyword>
<keyword id="KW-0872">Ion channel impairing toxin</keyword>
<keyword id="KW-0528">Neurotoxin</keyword>
<keyword id="KW-0629">Postsynaptic neurotoxin</keyword>
<keyword id="KW-0964">Secreted</keyword>
<keyword id="KW-0800">Toxin</keyword>
<evidence type="ECO:0000250" key="1">
    <source>
        <dbReference type="UniProtKB" id="P0C1D0"/>
    </source>
</evidence>
<evidence type="ECO:0000269" key="2">
    <source>
    </source>
</evidence>
<evidence type="ECO:0000303" key="3">
    <source>
    </source>
</evidence>
<evidence type="ECO:0000305" key="4"/>
<feature type="peptide" id="PRO_0000447213" description="Alpha-conotoxin BruIB" evidence="2">
    <location>
        <begin position="1"/>
        <end position="13"/>
    </location>
</feature>
<feature type="modified residue" description="4-hydroxyproline" evidence="2">
    <location>
        <position position="7"/>
    </location>
</feature>
<feature type="modified residue" description="Cysteine amide" evidence="2">
    <location>
        <position position="13"/>
    </location>
</feature>
<feature type="disulfide bond" evidence="1">
    <location>
        <begin position="3"/>
        <end position="9"/>
    </location>
</feature>
<feature type="disulfide bond" evidence="1">
    <location>
        <begin position="4"/>
        <end position="13"/>
    </location>
</feature>
<comment type="function">
    <text evidence="2">Acts as an inhibitor of nicotinic acetylcholine receptors (nAChR) (PubMed:25466886). Specifically inhibits the alpha-7 nAChRs of D.melanogaster, and seems to have no inhibitory effect on vertebrate nAChR subtypes (PubMed:25466886).</text>
</comment>
<comment type="subcellular location">
    <subcellularLocation>
        <location evidence="2">Secreted</location>
    </subcellularLocation>
</comment>
<comment type="tissue specificity">
    <text evidence="2">Expressed by the venom duct (at protein level).</text>
</comment>
<comment type="domain">
    <text evidence="4">The cysteine framework is I (CC-C-C). Alpha4/3 pattern.</text>
</comment>
<comment type="similarity">
    <text evidence="4">Belongs to the conotoxin A superfamily.</text>
</comment>
<protein>
    <recommendedName>
        <fullName evidence="3">Alpha-conotoxin BruIB</fullName>
    </recommendedName>
</protein>
<accession>C0HLK1</accession>